<feature type="chain" id="PRO_1000200388" description="tRNA uridine(34) hydroxylase">
    <location>
        <begin position="1"/>
        <end position="253"/>
    </location>
</feature>
<feature type="domain" description="Rhodanese" evidence="1">
    <location>
        <begin position="127"/>
        <end position="221"/>
    </location>
</feature>
<feature type="active site" description="Cysteine persulfide intermediate" evidence="1">
    <location>
        <position position="181"/>
    </location>
</feature>
<sequence>MITNTAAYQFVTIQHPQTLAASVLAQAEQQALKGSVLIAEEGINLFLAGDAEQIGAFYAWLQADARFARMRIKYSESAYQPFARLKVKIKPEIISFRRDDASPLQGRAPSVTPAVLREWLRNGQDDRGRPLVLLDTRNAQEVVYGTFQGALTLPIDTFTELPGALESHRAALADATVVSFCTGGIRCEKAALWMQADGMDNVLQLEGGILGYFEEVGGEGYDGRCFVFDERVALDPELKPLVDAERPAKTGKI</sequence>
<accession>B2STP6</accession>
<proteinExistence type="inferred from homology"/>
<gene>
    <name evidence="1" type="primary">trhO</name>
    <name type="ordered locus">PXO_01514</name>
</gene>
<keyword id="KW-0560">Oxidoreductase</keyword>
<keyword id="KW-0819">tRNA processing</keyword>
<name>TRHO_XANOP</name>
<comment type="function">
    <text evidence="1">Catalyzes oxygen-dependent 5-hydroxyuridine (ho5U) modification at position 34 in tRNAs.</text>
</comment>
<comment type="catalytic activity">
    <reaction evidence="1">
        <text>uridine(34) in tRNA + AH2 + O2 = 5-hydroxyuridine(34) in tRNA + A + H2O</text>
        <dbReference type="Rhea" id="RHEA:64224"/>
        <dbReference type="Rhea" id="RHEA-COMP:11727"/>
        <dbReference type="Rhea" id="RHEA-COMP:13381"/>
        <dbReference type="ChEBI" id="CHEBI:13193"/>
        <dbReference type="ChEBI" id="CHEBI:15377"/>
        <dbReference type="ChEBI" id="CHEBI:15379"/>
        <dbReference type="ChEBI" id="CHEBI:17499"/>
        <dbReference type="ChEBI" id="CHEBI:65315"/>
        <dbReference type="ChEBI" id="CHEBI:136877"/>
    </reaction>
</comment>
<comment type="similarity">
    <text evidence="1">Belongs to the TrhO family.</text>
</comment>
<organism>
    <name type="scientific">Xanthomonas oryzae pv. oryzae (strain PXO99A)</name>
    <dbReference type="NCBI Taxonomy" id="360094"/>
    <lineage>
        <taxon>Bacteria</taxon>
        <taxon>Pseudomonadati</taxon>
        <taxon>Pseudomonadota</taxon>
        <taxon>Gammaproteobacteria</taxon>
        <taxon>Lysobacterales</taxon>
        <taxon>Lysobacteraceae</taxon>
        <taxon>Xanthomonas</taxon>
    </lineage>
</organism>
<protein>
    <recommendedName>
        <fullName evidence="1">tRNA uridine(34) hydroxylase</fullName>
        <ecNumber evidence="1">1.14.-.-</ecNumber>
    </recommendedName>
    <alternativeName>
        <fullName evidence="1">tRNA hydroxylation protein O</fullName>
    </alternativeName>
</protein>
<dbReference type="EC" id="1.14.-.-" evidence="1"/>
<dbReference type="EMBL" id="CP000967">
    <property type="protein sequence ID" value="ACD59876.1"/>
    <property type="molecule type" value="Genomic_DNA"/>
</dbReference>
<dbReference type="RefSeq" id="WP_011408973.1">
    <property type="nucleotide sequence ID" value="NC_010717.2"/>
</dbReference>
<dbReference type="SMR" id="B2STP6"/>
<dbReference type="KEGG" id="xop:PXO_01514"/>
<dbReference type="eggNOG" id="COG1054">
    <property type="taxonomic scope" value="Bacteria"/>
</dbReference>
<dbReference type="HOGENOM" id="CLU_038878_0_1_6"/>
<dbReference type="Proteomes" id="UP000001740">
    <property type="component" value="Chromosome"/>
</dbReference>
<dbReference type="GO" id="GO:0016705">
    <property type="term" value="F:oxidoreductase activity, acting on paired donors, with incorporation or reduction of molecular oxygen"/>
    <property type="evidence" value="ECO:0007669"/>
    <property type="project" value="UniProtKB-UniRule"/>
</dbReference>
<dbReference type="GO" id="GO:0006400">
    <property type="term" value="P:tRNA modification"/>
    <property type="evidence" value="ECO:0007669"/>
    <property type="project" value="UniProtKB-UniRule"/>
</dbReference>
<dbReference type="Gene3D" id="3.30.70.100">
    <property type="match status" value="1"/>
</dbReference>
<dbReference type="Gene3D" id="3.40.250.10">
    <property type="entry name" value="Rhodanese-like domain"/>
    <property type="match status" value="1"/>
</dbReference>
<dbReference type="HAMAP" id="MF_00469">
    <property type="entry name" value="TrhO"/>
    <property type="match status" value="1"/>
</dbReference>
<dbReference type="InterPro" id="IPR001763">
    <property type="entry name" value="Rhodanese-like_dom"/>
</dbReference>
<dbReference type="InterPro" id="IPR036873">
    <property type="entry name" value="Rhodanese-like_dom_sf"/>
</dbReference>
<dbReference type="InterPro" id="IPR020936">
    <property type="entry name" value="TrhO"/>
</dbReference>
<dbReference type="InterPro" id="IPR040503">
    <property type="entry name" value="TRHO_N"/>
</dbReference>
<dbReference type="NCBIfam" id="NF003703">
    <property type="entry name" value="PRK05320.1"/>
    <property type="match status" value="1"/>
</dbReference>
<dbReference type="PANTHER" id="PTHR43268:SF3">
    <property type="entry name" value="RHODANESE-LIKE DOMAIN-CONTAINING PROTEIN 7-RELATED"/>
    <property type="match status" value="1"/>
</dbReference>
<dbReference type="PANTHER" id="PTHR43268">
    <property type="entry name" value="THIOSULFATE SULFURTRANSFERASE/RHODANESE-LIKE DOMAIN-CONTAINING PROTEIN 2"/>
    <property type="match status" value="1"/>
</dbReference>
<dbReference type="Pfam" id="PF00581">
    <property type="entry name" value="Rhodanese"/>
    <property type="match status" value="1"/>
</dbReference>
<dbReference type="Pfam" id="PF17773">
    <property type="entry name" value="UPF0176_N"/>
    <property type="match status" value="1"/>
</dbReference>
<dbReference type="SMART" id="SM00450">
    <property type="entry name" value="RHOD"/>
    <property type="match status" value="1"/>
</dbReference>
<dbReference type="SUPFAM" id="SSF52821">
    <property type="entry name" value="Rhodanese/Cell cycle control phosphatase"/>
    <property type="match status" value="1"/>
</dbReference>
<dbReference type="PROSITE" id="PS50206">
    <property type="entry name" value="RHODANESE_3"/>
    <property type="match status" value="1"/>
</dbReference>
<evidence type="ECO:0000255" key="1">
    <source>
        <dbReference type="HAMAP-Rule" id="MF_00469"/>
    </source>
</evidence>
<reference key="1">
    <citation type="journal article" date="2008" name="BMC Genomics">
        <title>Genome sequence and rapid evolution of the rice pathogen Xanthomonas oryzae pv. oryzae PXO99A.</title>
        <authorList>
            <person name="Salzberg S.L."/>
            <person name="Sommer D.D."/>
            <person name="Schatz M.C."/>
            <person name="Phillippy A.M."/>
            <person name="Rabinowicz P.D."/>
            <person name="Tsuge S."/>
            <person name="Furutani A."/>
            <person name="Ochiai H."/>
            <person name="Delcher A.L."/>
            <person name="Kelley D."/>
            <person name="Madupu R."/>
            <person name="Puiu D."/>
            <person name="Radune D."/>
            <person name="Shumway M."/>
            <person name="Trapnell C."/>
            <person name="Aparna G."/>
            <person name="Jha G."/>
            <person name="Pandey A."/>
            <person name="Patil P.B."/>
            <person name="Ishihara H."/>
            <person name="Meyer D.F."/>
            <person name="Szurek B."/>
            <person name="Verdier V."/>
            <person name="Koebnik R."/>
            <person name="Dow J.M."/>
            <person name="Ryan R.P."/>
            <person name="Hirata H."/>
            <person name="Tsuyumu S."/>
            <person name="Won Lee S."/>
            <person name="Seo Y.-S."/>
            <person name="Sriariyanum M."/>
            <person name="Ronald P.C."/>
            <person name="Sonti R.V."/>
            <person name="Van Sluys M.-A."/>
            <person name="Leach J.E."/>
            <person name="White F.F."/>
            <person name="Bogdanove A.J."/>
        </authorList>
    </citation>
    <scope>NUCLEOTIDE SEQUENCE [LARGE SCALE GENOMIC DNA]</scope>
    <source>
        <strain>PXO99A</strain>
    </source>
</reference>